<comment type="function">
    <text evidence="1">Catalyzes the epimerization of the S- and R-forms of NAD(P)HX, a damaged form of NAD(P)H that is a result of enzymatic or heat-dependent hydration. This is a prerequisite for the S-specific NAD(P)H-hydrate dehydratase to allow the repair of both epimers of NAD(P)HX.</text>
</comment>
<comment type="catalytic activity">
    <reaction>
        <text>(6R)-NADHX = (6S)-NADHX</text>
        <dbReference type="Rhea" id="RHEA:32215"/>
        <dbReference type="ChEBI" id="CHEBI:64074"/>
        <dbReference type="ChEBI" id="CHEBI:64075"/>
        <dbReference type="EC" id="5.1.99.6"/>
    </reaction>
</comment>
<comment type="catalytic activity">
    <reaction>
        <text>(6R)-NADPHX = (6S)-NADPHX</text>
        <dbReference type="Rhea" id="RHEA:32227"/>
        <dbReference type="ChEBI" id="CHEBI:64076"/>
        <dbReference type="ChEBI" id="CHEBI:64077"/>
        <dbReference type="EC" id="5.1.99.6"/>
    </reaction>
</comment>
<comment type="cofactor">
    <cofactor evidence="1">
        <name>K(+)</name>
        <dbReference type="ChEBI" id="CHEBI:29103"/>
    </cofactor>
    <text evidence="1">Binds 1 potassium ion per subunit.</text>
</comment>
<comment type="similarity">
    <text evidence="1">Belongs to the NnrE/AIBP family.</text>
</comment>
<keyword id="KW-0413">Isomerase</keyword>
<keyword id="KW-0479">Metal-binding</keyword>
<keyword id="KW-0520">NAD</keyword>
<keyword id="KW-0521">NADP</keyword>
<keyword id="KW-0547">Nucleotide-binding</keyword>
<keyword id="KW-0630">Potassium</keyword>
<keyword id="KW-1185">Reference proteome</keyword>
<evidence type="ECO:0000255" key="1">
    <source>
        <dbReference type="HAMAP-Rule" id="MF_03159"/>
    </source>
</evidence>
<evidence type="ECO:0000312" key="2">
    <source>
        <dbReference type="EMBL" id="EDW27129.1"/>
    </source>
</evidence>
<sequence length="226" mass="25202">MVKYLSQSEAIELDLDLFEMFHVGQLMELAGLSCADAVAECFPAQTHPRVLVVCGPGNNGGDGLVCARHLSLMGYQPTVYYPKPTLMSLYENLTNQCHHMEIPSVKKCPSLSDAEEDYDLILDALFGFGFKPPVREDFVPLVKMMQETKVPIASVDIPSGWDVEKGKQSECDFEPKLLISLTAPKLCAEHFKGEHHYLGGRFVPPALQRKYQLNLPDYGSKLVVRL</sequence>
<accession>B4GWP5</accession>
<feature type="chain" id="PRO_0000379429" description="NAD(P)H-hydrate epimerase">
    <location>
        <begin position="1"/>
        <end position="226"/>
    </location>
</feature>
<feature type="domain" description="YjeF N-terminal" evidence="1">
    <location>
        <begin position="10"/>
        <end position="215"/>
    </location>
</feature>
<feature type="binding site" evidence="1">
    <location>
        <begin position="58"/>
        <end position="62"/>
    </location>
    <ligand>
        <name>(6S)-NADPHX</name>
        <dbReference type="ChEBI" id="CHEBI:64076"/>
    </ligand>
</feature>
<feature type="binding site" evidence="1">
    <location>
        <position position="59"/>
    </location>
    <ligand>
        <name>K(+)</name>
        <dbReference type="ChEBI" id="CHEBI:29103"/>
    </ligand>
</feature>
<feature type="binding site" evidence="1">
    <location>
        <position position="123"/>
    </location>
    <ligand>
        <name>K(+)</name>
        <dbReference type="ChEBI" id="CHEBI:29103"/>
    </ligand>
</feature>
<feature type="binding site" evidence="1">
    <location>
        <begin position="127"/>
        <end position="133"/>
    </location>
    <ligand>
        <name>(6S)-NADPHX</name>
        <dbReference type="ChEBI" id="CHEBI:64076"/>
    </ligand>
</feature>
<feature type="binding site" evidence="1">
    <location>
        <position position="156"/>
    </location>
    <ligand>
        <name>(6S)-NADPHX</name>
        <dbReference type="ChEBI" id="CHEBI:64076"/>
    </ligand>
</feature>
<feature type="binding site" evidence="1">
    <location>
        <position position="159"/>
    </location>
    <ligand>
        <name>K(+)</name>
        <dbReference type="ChEBI" id="CHEBI:29103"/>
    </ligand>
</feature>
<protein>
    <recommendedName>
        <fullName evidence="1">NAD(P)H-hydrate epimerase</fullName>
        <ecNumber>5.1.99.6</ecNumber>
    </recommendedName>
    <alternativeName>
        <fullName evidence="1">NAD(P)HX epimerase</fullName>
    </alternativeName>
</protein>
<gene>
    <name type="ORF">GL16587</name>
</gene>
<dbReference type="EC" id="5.1.99.6"/>
<dbReference type="EMBL" id="CH479194">
    <property type="protein sequence ID" value="EDW27129.1"/>
    <property type="molecule type" value="Genomic_DNA"/>
</dbReference>
<dbReference type="SMR" id="B4GWP5"/>
<dbReference type="STRING" id="7234.B4GWP5"/>
<dbReference type="EnsemblMetazoa" id="FBtr0182202">
    <property type="protein sequence ID" value="FBpp0180694"/>
    <property type="gene ID" value="FBgn0154191"/>
</dbReference>
<dbReference type="EnsemblMetazoa" id="XM_002022988.2">
    <property type="protein sequence ID" value="XP_002023024.1"/>
    <property type="gene ID" value="LOC6597897"/>
</dbReference>
<dbReference type="GeneID" id="6597897"/>
<dbReference type="KEGG" id="dpe:6597897"/>
<dbReference type="eggNOG" id="KOG2585">
    <property type="taxonomic scope" value="Eukaryota"/>
</dbReference>
<dbReference type="HOGENOM" id="CLU_024853_3_0_1"/>
<dbReference type="OMA" id="CHHMEIP"/>
<dbReference type="OrthoDB" id="10064708at2759"/>
<dbReference type="PhylomeDB" id="B4GWP5"/>
<dbReference type="Proteomes" id="UP000008744">
    <property type="component" value="Unassembled WGS sequence"/>
</dbReference>
<dbReference type="GO" id="GO:0005739">
    <property type="term" value="C:mitochondrion"/>
    <property type="evidence" value="ECO:0007669"/>
    <property type="project" value="TreeGrafter"/>
</dbReference>
<dbReference type="GO" id="GO:0046872">
    <property type="term" value="F:metal ion binding"/>
    <property type="evidence" value="ECO:0007669"/>
    <property type="project" value="UniProtKB-KW"/>
</dbReference>
<dbReference type="GO" id="GO:0052856">
    <property type="term" value="F:NAD(P)HX epimerase activity"/>
    <property type="evidence" value="ECO:0007669"/>
    <property type="project" value="UniProtKB-UniRule"/>
</dbReference>
<dbReference type="GO" id="GO:0000166">
    <property type="term" value="F:nucleotide binding"/>
    <property type="evidence" value="ECO:0007669"/>
    <property type="project" value="UniProtKB-KW"/>
</dbReference>
<dbReference type="Gene3D" id="3.40.50.10260">
    <property type="entry name" value="YjeF N-terminal domain"/>
    <property type="match status" value="1"/>
</dbReference>
<dbReference type="HAMAP" id="MF_01966">
    <property type="entry name" value="NADHX_epimerase"/>
    <property type="match status" value="1"/>
</dbReference>
<dbReference type="InterPro" id="IPR004443">
    <property type="entry name" value="YjeF_N_dom"/>
</dbReference>
<dbReference type="InterPro" id="IPR036652">
    <property type="entry name" value="YjeF_N_dom_sf"/>
</dbReference>
<dbReference type="InterPro" id="IPR032976">
    <property type="entry name" value="YJEFN_prot_NAXE-like"/>
</dbReference>
<dbReference type="NCBIfam" id="TIGR00197">
    <property type="entry name" value="yjeF_nterm"/>
    <property type="match status" value="1"/>
</dbReference>
<dbReference type="PANTHER" id="PTHR13232">
    <property type="entry name" value="NAD(P)H-HYDRATE EPIMERASE"/>
    <property type="match status" value="1"/>
</dbReference>
<dbReference type="PANTHER" id="PTHR13232:SF10">
    <property type="entry name" value="NAD(P)H-HYDRATE EPIMERASE"/>
    <property type="match status" value="1"/>
</dbReference>
<dbReference type="Pfam" id="PF03853">
    <property type="entry name" value="YjeF_N"/>
    <property type="match status" value="1"/>
</dbReference>
<dbReference type="SUPFAM" id="SSF64153">
    <property type="entry name" value="YjeF N-terminal domain-like"/>
    <property type="match status" value="1"/>
</dbReference>
<dbReference type="PROSITE" id="PS51385">
    <property type="entry name" value="YJEF_N"/>
    <property type="match status" value="1"/>
</dbReference>
<proteinExistence type="inferred from homology"/>
<name>NNRE_DROPE</name>
<organism>
    <name type="scientific">Drosophila persimilis</name>
    <name type="common">Fruit fly</name>
    <dbReference type="NCBI Taxonomy" id="7234"/>
    <lineage>
        <taxon>Eukaryota</taxon>
        <taxon>Metazoa</taxon>
        <taxon>Ecdysozoa</taxon>
        <taxon>Arthropoda</taxon>
        <taxon>Hexapoda</taxon>
        <taxon>Insecta</taxon>
        <taxon>Pterygota</taxon>
        <taxon>Neoptera</taxon>
        <taxon>Endopterygota</taxon>
        <taxon>Diptera</taxon>
        <taxon>Brachycera</taxon>
        <taxon>Muscomorpha</taxon>
        <taxon>Ephydroidea</taxon>
        <taxon>Drosophilidae</taxon>
        <taxon>Drosophila</taxon>
        <taxon>Sophophora</taxon>
    </lineage>
</organism>
<reference evidence="2" key="1">
    <citation type="journal article" date="2007" name="Nature">
        <title>Evolution of genes and genomes on the Drosophila phylogeny.</title>
        <authorList>
            <consortium name="Drosophila 12 genomes consortium"/>
        </authorList>
    </citation>
    <scope>NUCLEOTIDE SEQUENCE [LARGE SCALE GENOMIC DNA]</scope>
    <source>
        <strain>MSH-3 / Tucson 14011-0111.49</strain>
    </source>
</reference>